<comment type="function">
    <text evidence="1">Proto-oncogene with serine/threonine kinase activity involved in cell survival and cell proliferation.</text>
</comment>
<comment type="catalytic activity">
    <reaction>
        <text>L-seryl-[protein] + ATP = O-phospho-L-seryl-[protein] + ADP + H(+)</text>
        <dbReference type="Rhea" id="RHEA:17989"/>
        <dbReference type="Rhea" id="RHEA-COMP:9863"/>
        <dbReference type="Rhea" id="RHEA-COMP:11604"/>
        <dbReference type="ChEBI" id="CHEBI:15378"/>
        <dbReference type="ChEBI" id="CHEBI:29999"/>
        <dbReference type="ChEBI" id="CHEBI:30616"/>
        <dbReference type="ChEBI" id="CHEBI:83421"/>
        <dbReference type="ChEBI" id="CHEBI:456216"/>
        <dbReference type="EC" id="2.7.11.1"/>
    </reaction>
</comment>
<comment type="catalytic activity">
    <reaction>
        <text>L-threonyl-[protein] + ATP = O-phospho-L-threonyl-[protein] + ADP + H(+)</text>
        <dbReference type="Rhea" id="RHEA:46608"/>
        <dbReference type="Rhea" id="RHEA-COMP:11060"/>
        <dbReference type="Rhea" id="RHEA-COMP:11605"/>
        <dbReference type="ChEBI" id="CHEBI:15378"/>
        <dbReference type="ChEBI" id="CHEBI:30013"/>
        <dbReference type="ChEBI" id="CHEBI:30616"/>
        <dbReference type="ChEBI" id="CHEBI:61977"/>
        <dbReference type="ChEBI" id="CHEBI:456216"/>
        <dbReference type="EC" id="2.7.11.1"/>
    </reaction>
</comment>
<comment type="PTM">
    <text evidence="1">Autophosphorylated.</text>
</comment>
<comment type="similarity">
    <text evidence="4">Belongs to the protein kinase superfamily. CAMK Ser/Thr protein kinase family. PIM subfamily.</text>
</comment>
<feature type="chain" id="PRO_0000086531" description="Serine/threonine-protein kinase pim-2">
    <location>
        <begin position="1"/>
        <end position="310"/>
    </location>
</feature>
<feature type="domain" description="Protein kinase" evidence="2">
    <location>
        <begin position="30"/>
        <end position="290"/>
    </location>
</feature>
<feature type="active site" description="Proton acceptor" evidence="2 3">
    <location>
        <position position="167"/>
    </location>
</feature>
<feature type="binding site" evidence="2">
    <location>
        <begin position="36"/>
        <end position="44"/>
    </location>
    <ligand>
        <name>ATP</name>
        <dbReference type="ChEBI" id="CHEBI:30616"/>
    </ligand>
</feature>
<feature type="binding site" evidence="2">
    <location>
        <position position="59"/>
    </location>
    <ligand>
        <name>ATP</name>
        <dbReference type="ChEBI" id="CHEBI:30616"/>
    </ligand>
</feature>
<feature type="sequence conflict" description="In Ref. 3; AAH75737." evidence="4" ref="3">
    <original>G</original>
    <variation>R</variation>
    <location>
        <position position="53"/>
    </location>
</feature>
<feature type="sequence conflict" description="In Ref. 3; AAH45836." evidence="4" ref="3">
    <original>Y</original>
    <variation>F</variation>
    <location>
        <position position="116"/>
    </location>
</feature>
<feature type="sequence conflict" description="In Ref. 3; AAH75737." evidence="4" ref="3">
    <original>E</original>
    <variation>G</variation>
    <location>
        <position position="135"/>
    </location>
</feature>
<feature type="sequence conflict" description="In Ref. 1; AAC82370." evidence="4" ref="1">
    <original>A</original>
    <variation>R</variation>
    <location>
        <position position="138"/>
    </location>
</feature>
<feature type="sequence conflict" description="In Ref. 2; CAQ14393." evidence="4" ref="2">
    <original>Y</original>
    <variation>F</variation>
    <location>
        <position position="273"/>
    </location>
</feature>
<sequence length="310" mass="35102">MLDKRIVDVRLDQLEILKAKNGKEHFEKQYTMGNLLGSGGFGSVYSGHRISDGQKVAIKQISRDRIQQWSKMPGEVNPVPNEIALLQSLGGGSGSVPGHRGIIRMLDWFEIPGQEYLIVFEKPQHCQDLFDFITERGALDESLARRFLKQVIEAVQFCHSKGIVHRDIKDENILVDTRTGDIKVIDFGSGATLKDSMYTDFEGTRVYSPPEWILYHKYHALPLTVWSLGVLLYDMVCGDIPFEQDTDIVKAKPSFNKRISNDCRSLICSCLSYNPGDRPSLEQILQHPWMMESSVDNGDLQEESKIKPSL</sequence>
<gene>
    <name type="primary">pim2</name>
    <name type="synonym">pim1</name>
    <name type="ORF">si:dkey-83k24.1</name>
</gene>
<proteinExistence type="evidence at transcript level"/>
<name>PIM2_DANRE</name>
<reference key="1">
    <citation type="journal article" date="1999" name="Immunogenetics">
        <title>Cloning of a cDNA encoding a pim1 homologue in zebrafish, Danio rerio.</title>
        <authorList>
            <person name="Icard-Liepkalns C."/>
            <person name="Haire R.N."/>
            <person name="Strong S.J."/>
            <person name="Litman G.W."/>
        </authorList>
    </citation>
    <scope>NUCLEOTIDE SEQUENCE [MRNA]</scope>
    <source>
        <tissue>Kidney</tissue>
    </source>
</reference>
<reference key="2">
    <citation type="journal article" date="2013" name="Nature">
        <title>The zebrafish reference genome sequence and its relationship to the human genome.</title>
        <authorList>
            <person name="Howe K."/>
            <person name="Clark M.D."/>
            <person name="Torroja C.F."/>
            <person name="Torrance J."/>
            <person name="Berthelot C."/>
            <person name="Muffato M."/>
            <person name="Collins J.E."/>
            <person name="Humphray S."/>
            <person name="McLaren K."/>
            <person name="Matthews L."/>
            <person name="McLaren S."/>
            <person name="Sealy I."/>
            <person name="Caccamo M."/>
            <person name="Churcher C."/>
            <person name="Scott C."/>
            <person name="Barrett J.C."/>
            <person name="Koch R."/>
            <person name="Rauch G.J."/>
            <person name="White S."/>
            <person name="Chow W."/>
            <person name="Kilian B."/>
            <person name="Quintais L.T."/>
            <person name="Guerra-Assuncao J.A."/>
            <person name="Zhou Y."/>
            <person name="Gu Y."/>
            <person name="Yen J."/>
            <person name="Vogel J.H."/>
            <person name="Eyre T."/>
            <person name="Redmond S."/>
            <person name="Banerjee R."/>
            <person name="Chi J."/>
            <person name="Fu B."/>
            <person name="Langley E."/>
            <person name="Maguire S.F."/>
            <person name="Laird G.K."/>
            <person name="Lloyd D."/>
            <person name="Kenyon E."/>
            <person name="Donaldson S."/>
            <person name="Sehra H."/>
            <person name="Almeida-King J."/>
            <person name="Loveland J."/>
            <person name="Trevanion S."/>
            <person name="Jones M."/>
            <person name="Quail M."/>
            <person name="Willey D."/>
            <person name="Hunt A."/>
            <person name="Burton J."/>
            <person name="Sims S."/>
            <person name="McLay K."/>
            <person name="Plumb B."/>
            <person name="Davis J."/>
            <person name="Clee C."/>
            <person name="Oliver K."/>
            <person name="Clark R."/>
            <person name="Riddle C."/>
            <person name="Elliot D."/>
            <person name="Threadgold G."/>
            <person name="Harden G."/>
            <person name="Ware D."/>
            <person name="Begum S."/>
            <person name="Mortimore B."/>
            <person name="Kerry G."/>
            <person name="Heath P."/>
            <person name="Phillimore B."/>
            <person name="Tracey A."/>
            <person name="Corby N."/>
            <person name="Dunn M."/>
            <person name="Johnson C."/>
            <person name="Wood J."/>
            <person name="Clark S."/>
            <person name="Pelan S."/>
            <person name="Griffiths G."/>
            <person name="Smith M."/>
            <person name="Glithero R."/>
            <person name="Howden P."/>
            <person name="Barker N."/>
            <person name="Lloyd C."/>
            <person name="Stevens C."/>
            <person name="Harley J."/>
            <person name="Holt K."/>
            <person name="Panagiotidis G."/>
            <person name="Lovell J."/>
            <person name="Beasley H."/>
            <person name="Henderson C."/>
            <person name="Gordon D."/>
            <person name="Auger K."/>
            <person name="Wright D."/>
            <person name="Collins J."/>
            <person name="Raisen C."/>
            <person name="Dyer L."/>
            <person name="Leung K."/>
            <person name="Robertson L."/>
            <person name="Ambridge K."/>
            <person name="Leongamornlert D."/>
            <person name="McGuire S."/>
            <person name="Gilderthorp R."/>
            <person name="Griffiths C."/>
            <person name="Manthravadi D."/>
            <person name="Nichol S."/>
            <person name="Barker G."/>
            <person name="Whitehead S."/>
            <person name="Kay M."/>
            <person name="Brown J."/>
            <person name="Murnane C."/>
            <person name="Gray E."/>
            <person name="Humphries M."/>
            <person name="Sycamore N."/>
            <person name="Barker D."/>
            <person name="Saunders D."/>
            <person name="Wallis J."/>
            <person name="Babbage A."/>
            <person name="Hammond S."/>
            <person name="Mashreghi-Mohammadi M."/>
            <person name="Barr L."/>
            <person name="Martin S."/>
            <person name="Wray P."/>
            <person name="Ellington A."/>
            <person name="Matthews N."/>
            <person name="Ellwood M."/>
            <person name="Woodmansey R."/>
            <person name="Clark G."/>
            <person name="Cooper J."/>
            <person name="Tromans A."/>
            <person name="Grafham D."/>
            <person name="Skuce C."/>
            <person name="Pandian R."/>
            <person name="Andrews R."/>
            <person name="Harrison E."/>
            <person name="Kimberley A."/>
            <person name="Garnett J."/>
            <person name="Fosker N."/>
            <person name="Hall R."/>
            <person name="Garner P."/>
            <person name="Kelly D."/>
            <person name="Bird C."/>
            <person name="Palmer S."/>
            <person name="Gehring I."/>
            <person name="Berger A."/>
            <person name="Dooley C.M."/>
            <person name="Ersan-Urun Z."/>
            <person name="Eser C."/>
            <person name="Geiger H."/>
            <person name="Geisler M."/>
            <person name="Karotki L."/>
            <person name="Kirn A."/>
            <person name="Konantz J."/>
            <person name="Konantz M."/>
            <person name="Oberlander M."/>
            <person name="Rudolph-Geiger S."/>
            <person name="Teucke M."/>
            <person name="Lanz C."/>
            <person name="Raddatz G."/>
            <person name="Osoegawa K."/>
            <person name="Zhu B."/>
            <person name="Rapp A."/>
            <person name="Widaa S."/>
            <person name="Langford C."/>
            <person name="Yang F."/>
            <person name="Schuster S.C."/>
            <person name="Carter N.P."/>
            <person name="Harrow J."/>
            <person name="Ning Z."/>
            <person name="Herrero J."/>
            <person name="Searle S.M."/>
            <person name="Enright A."/>
            <person name="Geisler R."/>
            <person name="Plasterk R.H."/>
            <person name="Lee C."/>
            <person name="Westerfield M."/>
            <person name="de Jong P.J."/>
            <person name="Zon L.I."/>
            <person name="Postlethwait J.H."/>
            <person name="Nusslein-Volhard C."/>
            <person name="Hubbard T.J."/>
            <person name="Roest Crollius H."/>
            <person name="Rogers J."/>
            <person name="Stemple D.L."/>
        </authorList>
    </citation>
    <scope>NUCLEOTIDE SEQUENCE [LARGE SCALE GENOMIC DNA]</scope>
    <source>
        <strain>Tuebingen</strain>
    </source>
</reference>
<reference key="3">
    <citation type="submission" date="2004-07" db="EMBL/GenBank/DDBJ databases">
        <authorList>
            <consortium name="NIH - Zebrafish Gene Collection (ZGC) project"/>
        </authorList>
    </citation>
    <scope>NUCLEOTIDE SEQUENCE [LARGE SCALE MRNA]</scope>
    <source>
        <tissue>Embryo</tissue>
    </source>
</reference>
<organism>
    <name type="scientific">Danio rerio</name>
    <name type="common">Zebrafish</name>
    <name type="synonym">Brachydanio rerio</name>
    <dbReference type="NCBI Taxonomy" id="7955"/>
    <lineage>
        <taxon>Eukaryota</taxon>
        <taxon>Metazoa</taxon>
        <taxon>Chordata</taxon>
        <taxon>Craniata</taxon>
        <taxon>Vertebrata</taxon>
        <taxon>Euteleostomi</taxon>
        <taxon>Actinopterygii</taxon>
        <taxon>Neopterygii</taxon>
        <taxon>Teleostei</taxon>
        <taxon>Ostariophysi</taxon>
        <taxon>Cypriniformes</taxon>
        <taxon>Danionidae</taxon>
        <taxon>Danioninae</taxon>
        <taxon>Danio</taxon>
    </lineage>
</organism>
<accession>Q9YHZ5</accession>
<accession>B0UYD2</accession>
<accession>Q6DI52</accession>
<accession>Q7ZVJ5</accession>
<accession>Q8JFW9</accession>
<dbReference type="EC" id="2.7.11.1"/>
<dbReference type="EMBL" id="AF062643">
    <property type="protein sequence ID" value="AAC82370.1"/>
    <property type="molecule type" value="mRNA"/>
</dbReference>
<dbReference type="EMBL" id="AL590148">
    <property type="protein sequence ID" value="CAD43418.1"/>
    <property type="molecule type" value="Genomic_DNA"/>
</dbReference>
<dbReference type="EMBL" id="CR450685">
    <property type="protein sequence ID" value="CAQ14393.1"/>
    <property type="molecule type" value="Genomic_DNA"/>
</dbReference>
<dbReference type="EMBL" id="BC045836">
    <property type="protein sequence ID" value="AAH45836.1"/>
    <property type="molecule type" value="mRNA"/>
</dbReference>
<dbReference type="EMBL" id="BC075737">
    <property type="protein sequence ID" value="AAH75737.1"/>
    <property type="molecule type" value="mRNA"/>
</dbReference>
<dbReference type="SMR" id="Q9YHZ5"/>
<dbReference type="FunCoup" id="Q9YHZ5">
    <property type="interactions" value="10"/>
</dbReference>
<dbReference type="STRING" id="7955.ENSDARP00000076422"/>
<dbReference type="PaxDb" id="7955-ENSDARP00000076422"/>
<dbReference type="AGR" id="ZFIN:ZDB-GENE-000831-6"/>
<dbReference type="ZFIN" id="ZDB-GENE-000831-6">
    <property type="gene designation" value="pim2"/>
</dbReference>
<dbReference type="eggNOG" id="KOG0583">
    <property type="taxonomic scope" value="Eukaryota"/>
</dbReference>
<dbReference type="InParanoid" id="Q9YHZ5"/>
<dbReference type="PhylomeDB" id="Q9YHZ5"/>
<dbReference type="TreeFam" id="TF320810"/>
<dbReference type="PRO" id="PR:Q9YHZ5"/>
<dbReference type="Proteomes" id="UP000000437">
    <property type="component" value="Unplaced"/>
</dbReference>
<dbReference type="GO" id="GO:0005737">
    <property type="term" value="C:cytoplasm"/>
    <property type="evidence" value="ECO:0000318"/>
    <property type="project" value="GO_Central"/>
</dbReference>
<dbReference type="GO" id="GO:0005524">
    <property type="term" value="F:ATP binding"/>
    <property type="evidence" value="ECO:0007669"/>
    <property type="project" value="UniProtKB-KW"/>
</dbReference>
<dbReference type="GO" id="GO:0106310">
    <property type="term" value="F:protein serine kinase activity"/>
    <property type="evidence" value="ECO:0007669"/>
    <property type="project" value="RHEA"/>
</dbReference>
<dbReference type="GO" id="GO:0004674">
    <property type="term" value="F:protein serine/threonine kinase activity"/>
    <property type="evidence" value="ECO:0000318"/>
    <property type="project" value="GO_Central"/>
</dbReference>
<dbReference type="GO" id="GO:0006915">
    <property type="term" value="P:apoptotic process"/>
    <property type="evidence" value="ECO:0007669"/>
    <property type="project" value="UniProtKB-KW"/>
</dbReference>
<dbReference type="GO" id="GO:0030097">
    <property type="term" value="P:hemopoiesis"/>
    <property type="evidence" value="ECO:0000303"/>
    <property type="project" value="ZFIN"/>
</dbReference>
<dbReference type="GO" id="GO:0043066">
    <property type="term" value="P:negative regulation of apoptotic process"/>
    <property type="evidence" value="ECO:0000318"/>
    <property type="project" value="GO_Central"/>
</dbReference>
<dbReference type="GO" id="GO:1904263">
    <property type="term" value="P:positive regulation of TORC1 signaling"/>
    <property type="evidence" value="ECO:0000318"/>
    <property type="project" value="GO_Central"/>
</dbReference>
<dbReference type="GO" id="GO:0007346">
    <property type="term" value="P:regulation of mitotic cell cycle"/>
    <property type="evidence" value="ECO:0000318"/>
    <property type="project" value="GO_Central"/>
</dbReference>
<dbReference type="FunFam" id="3.30.200.20:FF:000363">
    <property type="entry name" value="Serine/threonine-protein kinase"/>
    <property type="match status" value="1"/>
</dbReference>
<dbReference type="FunFam" id="1.10.510.10:FF:000708">
    <property type="entry name" value="serine/threonine-protein kinase par-1-like"/>
    <property type="match status" value="1"/>
</dbReference>
<dbReference type="Gene3D" id="3.30.200.20">
    <property type="entry name" value="Phosphorylase Kinase, domain 1"/>
    <property type="match status" value="1"/>
</dbReference>
<dbReference type="Gene3D" id="1.10.510.10">
    <property type="entry name" value="Transferase(Phosphotransferase) domain 1"/>
    <property type="match status" value="1"/>
</dbReference>
<dbReference type="InterPro" id="IPR011009">
    <property type="entry name" value="Kinase-like_dom_sf"/>
</dbReference>
<dbReference type="InterPro" id="IPR017348">
    <property type="entry name" value="PIM1/2/3"/>
</dbReference>
<dbReference type="InterPro" id="IPR051138">
    <property type="entry name" value="PIM_Ser/Thr_kinase"/>
</dbReference>
<dbReference type="InterPro" id="IPR000719">
    <property type="entry name" value="Prot_kinase_dom"/>
</dbReference>
<dbReference type="InterPro" id="IPR017441">
    <property type="entry name" value="Protein_kinase_ATP_BS"/>
</dbReference>
<dbReference type="InterPro" id="IPR008271">
    <property type="entry name" value="Ser/Thr_kinase_AS"/>
</dbReference>
<dbReference type="PANTHER" id="PTHR22984">
    <property type="entry name" value="SERINE/THREONINE-PROTEIN KINASE PIM"/>
    <property type="match status" value="1"/>
</dbReference>
<dbReference type="PANTHER" id="PTHR22984:SF23">
    <property type="entry name" value="SERINE_THREONINE-PROTEIN KINASE PIM-2"/>
    <property type="match status" value="1"/>
</dbReference>
<dbReference type="Pfam" id="PF00069">
    <property type="entry name" value="Pkinase"/>
    <property type="match status" value="1"/>
</dbReference>
<dbReference type="PIRSF" id="PIRSF037993">
    <property type="entry name" value="STPK_Pim-1"/>
    <property type="match status" value="1"/>
</dbReference>
<dbReference type="SMART" id="SM00220">
    <property type="entry name" value="S_TKc"/>
    <property type="match status" value="1"/>
</dbReference>
<dbReference type="SUPFAM" id="SSF56112">
    <property type="entry name" value="Protein kinase-like (PK-like)"/>
    <property type="match status" value="1"/>
</dbReference>
<dbReference type="PROSITE" id="PS00107">
    <property type="entry name" value="PROTEIN_KINASE_ATP"/>
    <property type="match status" value="1"/>
</dbReference>
<dbReference type="PROSITE" id="PS50011">
    <property type="entry name" value="PROTEIN_KINASE_DOM"/>
    <property type="match status" value="1"/>
</dbReference>
<dbReference type="PROSITE" id="PS00108">
    <property type="entry name" value="PROTEIN_KINASE_ST"/>
    <property type="match status" value="1"/>
</dbReference>
<evidence type="ECO:0000250" key="1"/>
<evidence type="ECO:0000255" key="2">
    <source>
        <dbReference type="PROSITE-ProRule" id="PRU00159"/>
    </source>
</evidence>
<evidence type="ECO:0000255" key="3">
    <source>
        <dbReference type="PROSITE-ProRule" id="PRU10027"/>
    </source>
</evidence>
<evidence type="ECO:0000305" key="4"/>
<keyword id="KW-0053">Apoptosis</keyword>
<keyword id="KW-0067">ATP-binding</keyword>
<keyword id="KW-0418">Kinase</keyword>
<keyword id="KW-0547">Nucleotide-binding</keyword>
<keyword id="KW-0597">Phosphoprotein</keyword>
<keyword id="KW-0656">Proto-oncogene</keyword>
<keyword id="KW-1185">Reference proteome</keyword>
<keyword id="KW-0723">Serine/threonine-protein kinase</keyword>
<keyword id="KW-0808">Transferase</keyword>
<protein>
    <recommendedName>
        <fullName>Serine/threonine-protein kinase pim-2</fullName>
        <ecNumber>2.7.11.1</ecNumber>
    </recommendedName>
    <alternativeName>
        <fullName>Kinase pim-1</fullName>
    </alternativeName>
</protein>